<accession>Q75W16</accession>
<accession>Q8LH96</accession>
<evidence type="ECO:0000255" key="1"/>
<evidence type="ECO:0000256" key="2">
    <source>
        <dbReference type="SAM" id="MobiDB-lite"/>
    </source>
</evidence>
<evidence type="ECO:0000305" key="3"/>
<feature type="transit peptide" description="Chloroplast" evidence="1">
    <location>
        <begin position="1"/>
        <end position="54"/>
    </location>
</feature>
<feature type="chain" id="PRO_0000247311" description="Phospho-2-dehydro-3-deoxyheptonate aldolase 2, chloroplastic">
    <location>
        <begin position="55"/>
        <end position="539"/>
    </location>
</feature>
<feature type="region of interest" description="Disordered" evidence="2">
    <location>
        <begin position="1"/>
        <end position="23"/>
    </location>
</feature>
<feature type="region of interest" description="Disordered" evidence="2">
    <location>
        <begin position="41"/>
        <end position="70"/>
    </location>
</feature>
<feature type="compositionally biased region" description="Low complexity" evidence="2">
    <location>
        <begin position="7"/>
        <end position="21"/>
    </location>
</feature>
<gene>
    <name type="primary">DAHPS2</name>
    <name type="ordered locus">Os07g0622200</name>
    <name type="ordered locus">LOC_Os07g42960</name>
    <name type="ORF">P0594D10.136</name>
</gene>
<name>AROG_ORYSJ</name>
<comment type="catalytic activity">
    <reaction>
        <text>D-erythrose 4-phosphate + phosphoenolpyruvate + H2O = 7-phospho-2-dehydro-3-deoxy-D-arabino-heptonate + phosphate</text>
        <dbReference type="Rhea" id="RHEA:14717"/>
        <dbReference type="ChEBI" id="CHEBI:15377"/>
        <dbReference type="ChEBI" id="CHEBI:16897"/>
        <dbReference type="ChEBI" id="CHEBI:43474"/>
        <dbReference type="ChEBI" id="CHEBI:58394"/>
        <dbReference type="ChEBI" id="CHEBI:58702"/>
        <dbReference type="EC" id="2.5.1.54"/>
    </reaction>
</comment>
<comment type="pathway">
    <text>Metabolic intermediate biosynthesis; chorismate biosynthesis; chorismate from D-erythrose 4-phosphate and phosphoenolpyruvate: step 1/7.</text>
</comment>
<comment type="subcellular location">
    <subcellularLocation>
        <location evidence="3">Plastid</location>
        <location evidence="3">Chloroplast</location>
    </subcellularLocation>
</comment>
<comment type="similarity">
    <text evidence="3">Belongs to the class-II DAHP synthase family.</text>
</comment>
<comment type="sequence caution" evidence="3">
    <conflict type="erroneous gene model prediction">
        <sequence resource="EMBL-CDS" id="BAC10194"/>
    </conflict>
</comment>
<proteinExistence type="evidence at transcript level"/>
<dbReference type="EC" id="2.5.1.54"/>
<dbReference type="EMBL" id="AB122058">
    <property type="protein sequence ID" value="BAD15283.1"/>
    <property type="molecule type" value="mRNA"/>
</dbReference>
<dbReference type="EMBL" id="AB122082">
    <property type="protein sequence ID" value="BAD14926.1"/>
    <property type="molecule type" value="Genomic_DNA"/>
</dbReference>
<dbReference type="EMBL" id="AP004380">
    <property type="protein sequence ID" value="BAC10194.1"/>
    <property type="status" value="ALT_SEQ"/>
    <property type="molecule type" value="Genomic_DNA"/>
</dbReference>
<dbReference type="EMBL" id="AP014963">
    <property type="status" value="NOT_ANNOTATED_CDS"/>
    <property type="molecule type" value="Genomic_DNA"/>
</dbReference>
<dbReference type="RefSeq" id="XP_015646378.1">
    <property type="nucleotide sequence ID" value="XM_015790892.1"/>
</dbReference>
<dbReference type="SMR" id="Q75W16"/>
<dbReference type="BioGRID" id="812983">
    <property type="interactions" value="1"/>
</dbReference>
<dbReference type="FunCoup" id="Q75W16">
    <property type="interactions" value="1490"/>
</dbReference>
<dbReference type="STRING" id="39947.Q75W16"/>
<dbReference type="PaxDb" id="39947-Q75W16"/>
<dbReference type="eggNOG" id="ENOG502QPP7">
    <property type="taxonomic scope" value="Eukaryota"/>
</dbReference>
<dbReference type="InParanoid" id="Q75W16"/>
<dbReference type="OrthoDB" id="2338at2759"/>
<dbReference type="PlantReactome" id="R-OSA-1119430">
    <property type="pathway name" value="Chorismate biosynthesis"/>
</dbReference>
<dbReference type="UniPathway" id="UPA00053">
    <property type="reaction ID" value="UER00084"/>
</dbReference>
<dbReference type="Proteomes" id="UP000000763">
    <property type="component" value="Chromosome 7"/>
</dbReference>
<dbReference type="Proteomes" id="UP000059680">
    <property type="component" value="Chromosome 7"/>
</dbReference>
<dbReference type="GO" id="GO:0009507">
    <property type="term" value="C:chloroplast"/>
    <property type="evidence" value="ECO:0007669"/>
    <property type="project" value="UniProtKB-SubCell"/>
</dbReference>
<dbReference type="GO" id="GO:0003849">
    <property type="term" value="F:3-deoxy-7-phosphoheptulonate synthase activity"/>
    <property type="evidence" value="ECO:0007669"/>
    <property type="project" value="UniProtKB-EC"/>
</dbReference>
<dbReference type="GO" id="GO:0008652">
    <property type="term" value="P:amino acid biosynthetic process"/>
    <property type="evidence" value="ECO:0007669"/>
    <property type="project" value="UniProtKB-KW"/>
</dbReference>
<dbReference type="GO" id="GO:0009073">
    <property type="term" value="P:aromatic amino acid family biosynthetic process"/>
    <property type="evidence" value="ECO:0007669"/>
    <property type="project" value="UniProtKB-KW"/>
</dbReference>
<dbReference type="GO" id="GO:0009423">
    <property type="term" value="P:chorismate biosynthetic process"/>
    <property type="evidence" value="ECO:0007669"/>
    <property type="project" value="UniProtKB-UniPathway"/>
</dbReference>
<dbReference type="FunFam" id="3.20.20.70:FF:000128">
    <property type="entry name" value="Phospho-2-dehydro-3-deoxyheptonate aldolase"/>
    <property type="match status" value="1"/>
</dbReference>
<dbReference type="Gene3D" id="3.20.20.70">
    <property type="entry name" value="Aldolase class I"/>
    <property type="match status" value="1"/>
</dbReference>
<dbReference type="InterPro" id="IPR013785">
    <property type="entry name" value="Aldolase_TIM"/>
</dbReference>
<dbReference type="InterPro" id="IPR002480">
    <property type="entry name" value="DAHP_synth_2"/>
</dbReference>
<dbReference type="NCBIfam" id="TIGR01358">
    <property type="entry name" value="DAHP_synth_II"/>
    <property type="match status" value="1"/>
</dbReference>
<dbReference type="PANTHER" id="PTHR21337">
    <property type="entry name" value="PHOSPHO-2-DEHYDRO-3-DEOXYHEPTONATE ALDOLASE 1, 2"/>
    <property type="match status" value="1"/>
</dbReference>
<dbReference type="PANTHER" id="PTHR21337:SF19">
    <property type="entry name" value="PHOSPHO-2-DEHYDRO-3-DEOXYHEPTONATE ALDOLASE 2, CHLOROPLASTIC"/>
    <property type="match status" value="1"/>
</dbReference>
<dbReference type="Pfam" id="PF01474">
    <property type="entry name" value="DAHP_synth_2"/>
    <property type="match status" value="1"/>
</dbReference>
<dbReference type="SUPFAM" id="SSF51569">
    <property type="entry name" value="Aldolase"/>
    <property type="match status" value="1"/>
</dbReference>
<keyword id="KW-0028">Amino-acid biosynthesis</keyword>
<keyword id="KW-0057">Aromatic amino acid biosynthesis</keyword>
<keyword id="KW-0150">Chloroplast</keyword>
<keyword id="KW-0934">Plastid</keyword>
<keyword id="KW-1185">Reference proteome</keyword>
<keyword id="KW-0808">Transferase</keyword>
<keyword id="KW-0809">Transit peptide</keyword>
<organism>
    <name type="scientific">Oryza sativa subsp. japonica</name>
    <name type="common">Rice</name>
    <dbReference type="NCBI Taxonomy" id="39947"/>
    <lineage>
        <taxon>Eukaryota</taxon>
        <taxon>Viridiplantae</taxon>
        <taxon>Streptophyta</taxon>
        <taxon>Embryophyta</taxon>
        <taxon>Tracheophyta</taxon>
        <taxon>Spermatophyta</taxon>
        <taxon>Magnoliopsida</taxon>
        <taxon>Liliopsida</taxon>
        <taxon>Poales</taxon>
        <taxon>Poaceae</taxon>
        <taxon>BOP clade</taxon>
        <taxon>Oryzoideae</taxon>
        <taxon>Oryzeae</taxon>
        <taxon>Oryzinae</taxon>
        <taxon>Oryza</taxon>
        <taxon>Oryza sativa</taxon>
    </lineage>
</organism>
<reference key="1">
    <citation type="submission" date="2003-10" db="EMBL/GenBank/DDBJ databases">
        <title>The cDNA encoding 3-deoxy-D-arabino heptulosonate-7-phosphate synthase expressed in rice stem.</title>
        <authorList>
            <person name="Mase K."/>
            <person name="Nishikubo N."/>
            <person name="Satou K."/>
            <person name="Nakano Y."/>
            <person name="Kajita S."/>
            <person name="Katayama Y."/>
        </authorList>
    </citation>
    <scope>NUCLEOTIDE SEQUENCE [MRNA]</scope>
    <source>
        <strain>cv. Fujiminori</strain>
    </source>
</reference>
<reference key="2">
    <citation type="submission" date="2003-10" db="EMBL/GenBank/DDBJ databases">
        <title>The gene encoding 3-deoxy-D-arabino heptulosonate-7-phosphate synthase expressed in rice stem.</title>
        <authorList>
            <person name="Mase K."/>
            <person name="Nishikubo N."/>
            <person name="Satou K."/>
            <person name="Nakano Y."/>
            <person name="Kajita S."/>
            <person name="Katayama Y."/>
        </authorList>
    </citation>
    <scope>NUCLEOTIDE SEQUENCE [GENOMIC DNA]</scope>
    <source>
        <strain>cv. Fujiminori</strain>
    </source>
</reference>
<reference key="3">
    <citation type="journal article" date="2005" name="Nature">
        <title>The map-based sequence of the rice genome.</title>
        <authorList>
            <consortium name="International rice genome sequencing project (IRGSP)"/>
        </authorList>
    </citation>
    <scope>NUCLEOTIDE SEQUENCE [LARGE SCALE GENOMIC DNA]</scope>
    <source>
        <strain>cv. Nipponbare</strain>
    </source>
</reference>
<reference key="4">
    <citation type="journal article" date="2013" name="Rice">
        <title>Improvement of the Oryza sativa Nipponbare reference genome using next generation sequence and optical map data.</title>
        <authorList>
            <person name="Kawahara Y."/>
            <person name="de la Bastide M."/>
            <person name="Hamilton J.P."/>
            <person name="Kanamori H."/>
            <person name="McCombie W.R."/>
            <person name="Ouyang S."/>
            <person name="Schwartz D.C."/>
            <person name="Tanaka T."/>
            <person name="Wu J."/>
            <person name="Zhou S."/>
            <person name="Childs K.L."/>
            <person name="Davidson R.M."/>
            <person name="Lin H."/>
            <person name="Quesada-Ocampo L."/>
            <person name="Vaillancourt B."/>
            <person name="Sakai H."/>
            <person name="Lee S.S."/>
            <person name="Kim J."/>
            <person name="Numa H."/>
            <person name="Itoh T."/>
            <person name="Buell C.R."/>
            <person name="Matsumoto T."/>
        </authorList>
    </citation>
    <scope>GENOME REANNOTATION</scope>
    <source>
        <strain>cv. Nipponbare</strain>
    </source>
</reference>
<protein>
    <recommendedName>
        <fullName>Phospho-2-dehydro-3-deoxyheptonate aldolase 2, chloroplastic</fullName>
        <ecNumber>2.5.1.54</ecNumber>
    </recommendedName>
    <alternativeName>
        <fullName>3-deoxy-D-arabino-heptulosonate 7-phosphate synthase 2</fullName>
    </alternativeName>
    <alternativeName>
        <fullName>DAHP synthase 2</fullName>
    </alternativeName>
    <alternativeName>
        <fullName>Phospho-2-keto-3-deoxyheptonate aldolase 2</fullName>
    </alternativeName>
</protein>
<sequence>MALATNSAAVSGGAAAAASSAPQPRLAATFLPMRRRTVSAVHAADPAKSNGPVQAAAKASSPSTVAAPEKKPVGLGKWTVDSWKAKKALQLPEYPSQEELDSVLKTIETFPPVVFAGEARHLEERLADAAMGRAFVLQGGDCAESFKEFNANNIRDTFRILLQMGAVLMFGGQMPVVKVVGRMAGQFAKPRSDSFEERDGVKLPSYRGDNINGDTFDEKSRVPDPQRMIRAYAQSVATLNLLRAFATGGYAAMQRVTQWNLDFMDHSEQGDRRYRELAHRVDEALGFMTAAGLTVDHPIMTTTDFWTSHECLLLPYEQSLTREDSTSGLFYDCSAHMLWVGERTRQLDGAHVEFLRGVANPLGIKVSDKMNPRDLVKLIEILNPSNKPGRITIITRMGAENMRVKLPHLIRAVRNSGQIVTWITDPMHGNTIKAPCGLKTRPFDSILAEVRAFFDVHDQEGSHPGGIHLEMTGQNVTECIGGSRTVTFDDLSDRYHTHCDPRLNASQSLELAFIIAERLRRRRMRSGVNSNLPLPPLAF</sequence>